<evidence type="ECO:0000255" key="1">
    <source>
        <dbReference type="HAMAP-Rule" id="MF_00152"/>
    </source>
</evidence>
<gene>
    <name evidence="1" type="primary">nfo</name>
    <name type="ordered locus">BCAH187_A4418</name>
</gene>
<dbReference type="EC" id="3.1.21.2" evidence="1"/>
<dbReference type="EMBL" id="CP001177">
    <property type="protein sequence ID" value="ACJ78219.1"/>
    <property type="molecule type" value="Genomic_DNA"/>
</dbReference>
<dbReference type="SMR" id="B7HPI4"/>
<dbReference type="KEGG" id="bcr:BCAH187_A4418"/>
<dbReference type="HOGENOM" id="CLU_025885_4_1_9"/>
<dbReference type="Proteomes" id="UP000002214">
    <property type="component" value="Chromosome"/>
</dbReference>
<dbReference type="GO" id="GO:0008833">
    <property type="term" value="F:deoxyribonuclease IV (phage-T4-induced) activity"/>
    <property type="evidence" value="ECO:0007669"/>
    <property type="project" value="UniProtKB-UniRule"/>
</dbReference>
<dbReference type="GO" id="GO:0003677">
    <property type="term" value="F:DNA binding"/>
    <property type="evidence" value="ECO:0007669"/>
    <property type="project" value="InterPro"/>
</dbReference>
<dbReference type="GO" id="GO:0003906">
    <property type="term" value="F:DNA-(apurinic or apyrimidinic site) endonuclease activity"/>
    <property type="evidence" value="ECO:0007669"/>
    <property type="project" value="TreeGrafter"/>
</dbReference>
<dbReference type="GO" id="GO:0008081">
    <property type="term" value="F:phosphoric diester hydrolase activity"/>
    <property type="evidence" value="ECO:0007669"/>
    <property type="project" value="TreeGrafter"/>
</dbReference>
<dbReference type="GO" id="GO:0008270">
    <property type="term" value="F:zinc ion binding"/>
    <property type="evidence" value="ECO:0007669"/>
    <property type="project" value="UniProtKB-UniRule"/>
</dbReference>
<dbReference type="GO" id="GO:0006284">
    <property type="term" value="P:base-excision repair"/>
    <property type="evidence" value="ECO:0007669"/>
    <property type="project" value="TreeGrafter"/>
</dbReference>
<dbReference type="CDD" id="cd00019">
    <property type="entry name" value="AP2Ec"/>
    <property type="match status" value="1"/>
</dbReference>
<dbReference type="FunFam" id="3.20.20.150:FF:000001">
    <property type="entry name" value="Probable endonuclease 4"/>
    <property type="match status" value="1"/>
</dbReference>
<dbReference type="Gene3D" id="3.20.20.150">
    <property type="entry name" value="Divalent-metal-dependent TIM barrel enzymes"/>
    <property type="match status" value="1"/>
</dbReference>
<dbReference type="HAMAP" id="MF_00152">
    <property type="entry name" value="Nfo"/>
    <property type="match status" value="1"/>
</dbReference>
<dbReference type="InterPro" id="IPR001719">
    <property type="entry name" value="AP_endonuc_2"/>
</dbReference>
<dbReference type="InterPro" id="IPR018246">
    <property type="entry name" value="AP_endonuc_F2_Zn_BS"/>
</dbReference>
<dbReference type="InterPro" id="IPR036237">
    <property type="entry name" value="Xyl_isomerase-like_sf"/>
</dbReference>
<dbReference type="InterPro" id="IPR013022">
    <property type="entry name" value="Xyl_isomerase-like_TIM-brl"/>
</dbReference>
<dbReference type="NCBIfam" id="TIGR00587">
    <property type="entry name" value="nfo"/>
    <property type="match status" value="1"/>
</dbReference>
<dbReference type="NCBIfam" id="NF002196">
    <property type="entry name" value="PRK01060.1-1"/>
    <property type="match status" value="1"/>
</dbReference>
<dbReference type="PANTHER" id="PTHR21445:SF0">
    <property type="entry name" value="APURINIC-APYRIMIDINIC ENDONUCLEASE"/>
    <property type="match status" value="1"/>
</dbReference>
<dbReference type="PANTHER" id="PTHR21445">
    <property type="entry name" value="ENDONUCLEASE IV ENDODEOXYRIBONUCLEASE IV"/>
    <property type="match status" value="1"/>
</dbReference>
<dbReference type="Pfam" id="PF01261">
    <property type="entry name" value="AP_endonuc_2"/>
    <property type="match status" value="1"/>
</dbReference>
<dbReference type="SMART" id="SM00518">
    <property type="entry name" value="AP2Ec"/>
    <property type="match status" value="1"/>
</dbReference>
<dbReference type="SUPFAM" id="SSF51658">
    <property type="entry name" value="Xylose isomerase-like"/>
    <property type="match status" value="1"/>
</dbReference>
<dbReference type="PROSITE" id="PS00729">
    <property type="entry name" value="AP_NUCLEASE_F2_1"/>
    <property type="match status" value="1"/>
</dbReference>
<dbReference type="PROSITE" id="PS00730">
    <property type="entry name" value="AP_NUCLEASE_F2_2"/>
    <property type="match status" value="1"/>
</dbReference>
<dbReference type="PROSITE" id="PS00731">
    <property type="entry name" value="AP_NUCLEASE_F2_3"/>
    <property type="match status" value="1"/>
</dbReference>
<dbReference type="PROSITE" id="PS51432">
    <property type="entry name" value="AP_NUCLEASE_F2_4"/>
    <property type="match status" value="1"/>
</dbReference>
<keyword id="KW-0227">DNA damage</keyword>
<keyword id="KW-0234">DNA repair</keyword>
<keyword id="KW-0255">Endonuclease</keyword>
<keyword id="KW-0378">Hydrolase</keyword>
<keyword id="KW-0479">Metal-binding</keyword>
<keyword id="KW-0540">Nuclease</keyword>
<keyword id="KW-0862">Zinc</keyword>
<feature type="chain" id="PRO_1000118092" description="Probable endonuclease 4">
    <location>
        <begin position="1"/>
        <end position="298"/>
    </location>
</feature>
<feature type="binding site" evidence="1">
    <location>
        <position position="69"/>
    </location>
    <ligand>
        <name>Zn(2+)</name>
        <dbReference type="ChEBI" id="CHEBI:29105"/>
        <label>1</label>
    </ligand>
</feature>
<feature type="binding site" evidence="1">
    <location>
        <position position="111"/>
    </location>
    <ligand>
        <name>Zn(2+)</name>
        <dbReference type="ChEBI" id="CHEBI:29105"/>
        <label>1</label>
    </ligand>
</feature>
<feature type="binding site" evidence="1">
    <location>
        <position position="146"/>
    </location>
    <ligand>
        <name>Zn(2+)</name>
        <dbReference type="ChEBI" id="CHEBI:29105"/>
        <label>1</label>
    </ligand>
</feature>
<feature type="binding site" evidence="1">
    <location>
        <position position="146"/>
    </location>
    <ligand>
        <name>Zn(2+)</name>
        <dbReference type="ChEBI" id="CHEBI:29105"/>
        <label>2</label>
    </ligand>
</feature>
<feature type="binding site" evidence="1">
    <location>
        <position position="180"/>
    </location>
    <ligand>
        <name>Zn(2+)</name>
        <dbReference type="ChEBI" id="CHEBI:29105"/>
        <label>2</label>
    </ligand>
</feature>
<feature type="binding site" evidence="1">
    <location>
        <position position="183"/>
    </location>
    <ligand>
        <name>Zn(2+)</name>
        <dbReference type="ChEBI" id="CHEBI:29105"/>
        <label>3</label>
    </ligand>
</feature>
<feature type="binding site" evidence="1">
    <location>
        <position position="215"/>
    </location>
    <ligand>
        <name>Zn(2+)</name>
        <dbReference type="ChEBI" id="CHEBI:29105"/>
        <label>2</label>
    </ligand>
</feature>
<feature type="binding site" evidence="1">
    <location>
        <position position="228"/>
    </location>
    <ligand>
        <name>Zn(2+)</name>
        <dbReference type="ChEBI" id="CHEBI:29105"/>
        <label>3</label>
    </ligand>
</feature>
<feature type="binding site" evidence="1">
    <location>
        <position position="230"/>
    </location>
    <ligand>
        <name>Zn(2+)</name>
        <dbReference type="ChEBI" id="CHEBI:29105"/>
        <label>3</label>
    </ligand>
</feature>
<feature type="binding site" evidence="1">
    <location>
        <position position="260"/>
    </location>
    <ligand>
        <name>Zn(2+)</name>
        <dbReference type="ChEBI" id="CHEBI:29105"/>
        <label>2</label>
    </ligand>
</feature>
<reference key="1">
    <citation type="submission" date="2008-10" db="EMBL/GenBank/DDBJ databases">
        <title>Genome sequence of Bacillus cereus AH187.</title>
        <authorList>
            <person name="Dodson R.J."/>
            <person name="Durkin A.S."/>
            <person name="Rosovitz M.J."/>
            <person name="Rasko D.A."/>
            <person name="Kolsto A.B."/>
            <person name="Okstad O.A."/>
            <person name="Ravel J."/>
            <person name="Sutton G."/>
        </authorList>
    </citation>
    <scope>NUCLEOTIDE SEQUENCE [LARGE SCALE GENOMIC DNA]</scope>
    <source>
        <strain>AH187</strain>
    </source>
</reference>
<comment type="function">
    <text evidence="1">Endonuclease IV plays a role in DNA repair. It cleaves phosphodiester bonds at apurinic or apyrimidinic (AP) sites, generating a 3'-hydroxyl group and a 5'-terminal sugar phosphate.</text>
</comment>
<comment type="catalytic activity">
    <reaction evidence="1">
        <text>Endonucleolytic cleavage to 5'-phosphooligonucleotide end-products.</text>
        <dbReference type="EC" id="3.1.21.2"/>
    </reaction>
</comment>
<comment type="cofactor">
    <cofactor evidence="1">
        <name>Zn(2+)</name>
        <dbReference type="ChEBI" id="CHEBI:29105"/>
    </cofactor>
    <text evidence="1">Binds 3 Zn(2+) ions.</text>
</comment>
<comment type="similarity">
    <text evidence="1">Belongs to the AP endonuclease 2 family.</text>
</comment>
<proteinExistence type="inferred from homology"/>
<name>END4_BACC7</name>
<sequence>MLKIGSHVSMSGKKMLLAASEEAVSYGATTFMIYTGAPQNTRRKPIEELNIEAGRKHMEQNGIEEIIVHAPYIINVGNTTKPETFQLGVDFLRMEIERTSALGVAKQIVLHPGAHVGAGADAGIQQIIKGLNEVLTPDQTVNIALETMAGKGTECGRSFEEIAKIIDGVTYNEKLSVCFDTCHTHDAGYDIVNDFDGVLNEFDKIVGIDRLQVLHINDSKNVRGAGKDRHENIGFGHIGYKALHHIVHHPQLMHVPKILETPYVGEDKKDKKPPYKLEIEMLKNGTFDEGLLEKIKAQ</sequence>
<organism>
    <name type="scientific">Bacillus cereus (strain AH187)</name>
    <dbReference type="NCBI Taxonomy" id="405534"/>
    <lineage>
        <taxon>Bacteria</taxon>
        <taxon>Bacillati</taxon>
        <taxon>Bacillota</taxon>
        <taxon>Bacilli</taxon>
        <taxon>Bacillales</taxon>
        <taxon>Bacillaceae</taxon>
        <taxon>Bacillus</taxon>
        <taxon>Bacillus cereus group</taxon>
    </lineage>
</organism>
<accession>B7HPI4</accession>
<protein>
    <recommendedName>
        <fullName evidence="1">Probable endonuclease 4</fullName>
        <ecNumber evidence="1">3.1.21.2</ecNumber>
    </recommendedName>
    <alternativeName>
        <fullName evidence="1">Endodeoxyribonuclease IV</fullName>
    </alternativeName>
    <alternativeName>
        <fullName evidence="1">Endonuclease IV</fullName>
    </alternativeName>
</protein>